<name>PB2_I96A0</name>
<feature type="chain" id="PRO_0000279631" description="Polymerase basic protein 2">
    <location>
        <begin position="1"/>
        <end position="759"/>
    </location>
</feature>
<feature type="short sequence motif" description="Nuclear localization signal" evidence="2">
    <location>
        <begin position="736"/>
        <end position="739"/>
    </location>
</feature>
<feature type="site" description="Avian adaptation" evidence="2">
    <location>
        <position position="627"/>
    </location>
</feature>
<protein>
    <recommendedName>
        <fullName evidence="2">Polymerase basic protein 2</fullName>
    </recommendedName>
    <alternativeName>
        <fullName evidence="2">RNA-directed RNA polymerase subunit P3</fullName>
    </alternativeName>
</protein>
<proteinExistence type="evidence at protein level"/>
<gene>
    <name evidence="2" type="primary">PB2</name>
</gene>
<organismHost>
    <name type="scientific">Aves</name>
    <dbReference type="NCBI Taxonomy" id="8782"/>
</organismHost>
<organismHost>
    <name type="scientific">Felis catus</name>
    <name type="common">Cat</name>
    <name type="synonym">Felis silvestris catus</name>
    <dbReference type="NCBI Taxonomy" id="9685"/>
</organismHost>
<organismHost>
    <name type="scientific">Homo sapiens</name>
    <name type="common">Human</name>
    <dbReference type="NCBI Taxonomy" id="9606"/>
</organismHost>
<organismHost>
    <name type="scientific">Panthera pardus</name>
    <name type="common">Leopard</name>
    <name type="synonym">Felis pardus</name>
    <dbReference type="NCBI Taxonomy" id="9691"/>
</organismHost>
<organismHost>
    <name type="scientific">Panthera tigris</name>
    <name type="common">Tiger</name>
    <dbReference type="NCBI Taxonomy" id="9694"/>
</organismHost>
<organismHost>
    <name type="scientific">Sus scrofa</name>
    <name type="common">Pig</name>
    <dbReference type="NCBI Taxonomy" id="9823"/>
</organismHost>
<comment type="function">
    <text evidence="2">Plays an essential role in transcription initiation and cap-stealing mechanism, in which cellular capped pre-mRNAs are used to generate primers for viral transcription. Recognizes and binds the 7-methylguanosine-containing cap of the target pre-RNA which is subsequently cleaved after 10-13 nucleotides by the viral protein PA. Plays a role in the initiation of the viral genome replication and modulates the activity of the ribonucleoprotein (RNP) complex.</text>
</comment>
<comment type="subunit">
    <text evidence="2">Influenza RNA polymerase is composed of three subunits: PB1, PB2 and PA. Interacts (via N-terminus) with PB1 (via C-terminus). Interacts with nucleoprotein NP (via N-terminus).</text>
</comment>
<comment type="interaction">
    <interactant intactId="EBI-8290926">
        <id>Q9Q0V1</id>
    </interactant>
    <interactant intactId="EBI-8290908">
        <id>Q9Q0V0</id>
        <label>PB1</label>
    </interactant>
    <organismsDiffer>false</organismsDiffer>
    <experiments>2</experiments>
</comment>
<comment type="subcellular location">
    <subcellularLocation>
        <location evidence="2">Virion</location>
    </subcellularLocation>
    <subcellularLocation>
        <location evidence="2">Host nucleus</location>
    </subcellularLocation>
</comment>
<comment type="alternative products">
    <event type="alternative splicing"/>
    <isoform>
        <id>Q9Q0V1-1</id>
        <name>Polymerase basic protein 2</name>
        <sequence type="displayed"/>
    </isoform>
    <isoform>
        <id>P0DOG5-1</id>
        <name evidence="1">PB2-S1</name>
        <sequence type="external"/>
    </isoform>
</comment>
<comment type="similarity">
    <text evidence="2">Belongs to the influenza viruses PB2 family.</text>
</comment>
<keyword id="KW-0002">3D-structure</keyword>
<keyword id="KW-0025">Alternative splicing</keyword>
<keyword id="KW-1157">Cap snatching</keyword>
<keyword id="KW-1262">Eukaryotic host gene expression shutoff by virus</keyword>
<keyword id="KW-1191">Eukaryotic host transcription shutoff by virus</keyword>
<keyword id="KW-1190">Host gene expression shutoff by virus</keyword>
<keyword id="KW-1048">Host nucleus</keyword>
<keyword id="KW-0945">Host-virus interaction</keyword>
<keyword id="KW-1104">Inhibition of host RNA polymerase II by virus</keyword>
<keyword id="KW-0506">mRNA capping</keyword>
<keyword id="KW-0507">mRNA processing</keyword>
<keyword id="KW-1185">Reference proteome</keyword>
<keyword id="KW-1195">Viral transcription</keyword>
<keyword id="KW-0946">Virion</keyword>
<accession>Q9Q0V1</accession>
<sequence>MERIKELRDLMSQSRTREILTKTTVDHMAIIKKYTSGRQEKNPALRMKWMMAMKYPITADKRIMEMIPERNEQGQTLWSKTNDAGSDRVMVSPLAVTWWNRNGPTTSTVHYPKVYKTYFEKVERLKHGTFGPVHFRNQVKIRRRVDINPGHADLSAKEAQDVIMEVVFPNEVGARILTSESQLTITKEKKEELQDCKIAPLMVAYMLERELVRKTRFLPVAGGTSSVYIEVLHLTQGTCWEQMYTPGGEVRNDDVDQSLIIAARNIVRRATVSADPLASLLEMCHSTQIGGIRMVDILRQNPTEEQAVDICKAAMGLRISSSFSFGGFTFKRTNGSSVKKEEEVLTGNLQTLKIKVHEGYEEFTMVGRRATAILRKATRRLIQLIVSGRDEQSIAEAIIVAMVFSQEDCMIKAVRGDLNFVNRANQRLNPMHQLLRHFQKDAKVLFQNWGIEPIDNVMGMIGILPDMTPSAEMSLRGVRVSKMGVDEYSSTERVVVSIDRFLRVRDQQGNVLLSPEEVSETQGTEKLTITYSSSMMWEINGPESVLVNTYQWIIRNWETVKIQWSQDPTMLYNKMEFESFQSLVPKAARSQYSGFVRTLFQQMRDVLGTFDTVQIIKLLPFAAAPPEPSRMQFSSLTVNVRGSGMRILVRGNSPVFNYNKATKRLTVLGKDAGALTEDPDEGTAGVESAVLRGFLILGREDKRYGPALSINELSNLAKGEKANVLIMQGDVVLVMKRKRDFSILTDSQTATKRIRMAIN</sequence>
<evidence type="ECO:0000250" key="1">
    <source>
        <dbReference type="UniProtKB" id="P03427"/>
    </source>
</evidence>
<evidence type="ECO:0000255" key="2">
    <source>
        <dbReference type="HAMAP-Rule" id="MF_04062"/>
    </source>
</evidence>
<reference key="1">
    <citation type="journal article" date="1999" name="Virology">
        <title>Genetic characterization of the pathogenic influenza A/Goose/Guangdong/1/96 (H5N1) virus: similarity of its hemagglutinin gene to those of H5N1 viruses from the 1997 outbreaks in Hong Kong.</title>
        <authorList>
            <person name="Xu X."/>
            <person name="Subbarao K."/>
            <person name="Cox N.J."/>
            <person name="Guo Y."/>
        </authorList>
    </citation>
    <scope>NUCLEOTIDE SEQUENCE [GENOMIC RNA]</scope>
</reference>
<dbReference type="EMBL" id="AF144300">
    <property type="protein sequence ID" value="AAD51922.1"/>
    <property type="molecule type" value="Genomic_RNA"/>
</dbReference>
<dbReference type="RefSeq" id="YP_308664.1">
    <molecule id="Q9Q0V1-1"/>
    <property type="nucleotide sequence ID" value="NC_007357.1"/>
</dbReference>
<dbReference type="PDB" id="8H69">
    <property type="method" value="EM"/>
    <property type="resolution" value="3.70 A"/>
    <property type="chains" value="C=1-759"/>
</dbReference>
<dbReference type="PDB" id="9BL5">
    <property type="method" value="X-ray"/>
    <property type="resolution" value="2.00 A"/>
    <property type="chains" value="C=549-557"/>
</dbReference>
<dbReference type="PDB" id="9BL6">
    <property type="method" value="X-ray"/>
    <property type="resolution" value="2.40 A"/>
    <property type="chains" value="C=549-557"/>
</dbReference>
<dbReference type="PDBsum" id="8H69"/>
<dbReference type="PDBsum" id="9BL5"/>
<dbReference type="PDBsum" id="9BL6"/>
<dbReference type="SMR" id="Q9Q0V1"/>
<dbReference type="IntAct" id="Q9Q0V1">
    <property type="interactions" value="1"/>
</dbReference>
<dbReference type="MINT" id="Q9Q0V1"/>
<dbReference type="GeneID" id="3654615"/>
<dbReference type="KEGG" id="vg:3654615"/>
<dbReference type="OrthoDB" id="431at10239"/>
<dbReference type="PRO" id="PR:Q9Q0V1"/>
<dbReference type="Proteomes" id="UP000131152">
    <property type="component" value="Genome"/>
</dbReference>
<dbReference type="GO" id="GO:0042025">
    <property type="term" value="C:host cell nucleus"/>
    <property type="evidence" value="ECO:0007669"/>
    <property type="project" value="UniProtKB-SubCell"/>
</dbReference>
<dbReference type="GO" id="GO:0044423">
    <property type="term" value="C:virion component"/>
    <property type="evidence" value="ECO:0007669"/>
    <property type="project" value="UniProtKB-UniRule"/>
</dbReference>
<dbReference type="GO" id="GO:0003723">
    <property type="term" value="F:RNA binding"/>
    <property type="evidence" value="ECO:0007669"/>
    <property type="project" value="UniProtKB-UniRule"/>
</dbReference>
<dbReference type="GO" id="GO:0003968">
    <property type="term" value="F:RNA-directed RNA polymerase activity"/>
    <property type="evidence" value="ECO:0007669"/>
    <property type="project" value="UniProtKB-UniRule"/>
</dbReference>
<dbReference type="GO" id="GO:0006370">
    <property type="term" value="P:7-methylguanosine mRNA capping"/>
    <property type="evidence" value="ECO:0007669"/>
    <property type="project" value="UniProtKB-UniRule"/>
</dbReference>
<dbReference type="GO" id="GO:0075526">
    <property type="term" value="P:cap snatching"/>
    <property type="evidence" value="ECO:0007669"/>
    <property type="project" value="UniProtKB-UniRule"/>
</dbReference>
<dbReference type="GO" id="GO:0006351">
    <property type="term" value="P:DNA-templated transcription"/>
    <property type="evidence" value="ECO:0007669"/>
    <property type="project" value="UniProtKB-UniRule"/>
</dbReference>
<dbReference type="GO" id="GO:0039657">
    <property type="term" value="P:symbiont-mediated suppression of host gene expression"/>
    <property type="evidence" value="ECO:0007669"/>
    <property type="project" value="UniProtKB-KW"/>
</dbReference>
<dbReference type="GO" id="GO:0039523">
    <property type="term" value="P:symbiont-mediated suppression of host mRNA transcription via inhibition of RNA polymerase II activity"/>
    <property type="evidence" value="ECO:0007669"/>
    <property type="project" value="UniProtKB-UniRule"/>
</dbReference>
<dbReference type="GO" id="GO:0039694">
    <property type="term" value="P:viral RNA genome replication"/>
    <property type="evidence" value="ECO:0007669"/>
    <property type="project" value="InterPro"/>
</dbReference>
<dbReference type="Gene3D" id="3.30.30.90">
    <property type="entry name" value="Polymerase Basic Protein 2, C-terminal domain"/>
    <property type="match status" value="1"/>
</dbReference>
<dbReference type="HAMAP" id="MF_04062">
    <property type="entry name" value="INV_PB2"/>
    <property type="match status" value="1"/>
</dbReference>
<dbReference type="InterPro" id="IPR049110">
    <property type="entry name" value="Flu_PB2_2nd"/>
</dbReference>
<dbReference type="InterPro" id="IPR049114">
    <property type="entry name" value="Flu_PB2_6th"/>
</dbReference>
<dbReference type="InterPro" id="IPR049115">
    <property type="entry name" value="Flu_PB2_C"/>
</dbReference>
<dbReference type="InterPro" id="IPR048298">
    <property type="entry name" value="Flu_PB2_CAP-bd"/>
</dbReference>
<dbReference type="InterPro" id="IPR049111">
    <property type="entry name" value="Flu_PB2_middle"/>
</dbReference>
<dbReference type="InterPro" id="IPR049106">
    <property type="entry name" value="Flu_PB2_N"/>
</dbReference>
<dbReference type="InterPro" id="IPR001591">
    <property type="entry name" value="INV_PB2"/>
</dbReference>
<dbReference type="InterPro" id="IPR049113">
    <property type="entry name" value="PB2_helical"/>
</dbReference>
<dbReference type="InterPro" id="IPR037258">
    <property type="entry name" value="PDB2_C"/>
</dbReference>
<dbReference type="Pfam" id="PF20947">
    <property type="entry name" value="Flu_PB2_1st"/>
    <property type="match status" value="1"/>
</dbReference>
<dbReference type="Pfam" id="PF20948">
    <property type="entry name" value="Flu_PB2_2nd"/>
    <property type="match status" value="1"/>
</dbReference>
<dbReference type="Pfam" id="PF20949">
    <property type="entry name" value="Flu_PB2_3rd"/>
    <property type="match status" value="1"/>
</dbReference>
<dbReference type="Pfam" id="PF20950">
    <property type="entry name" value="Flu_PB2_4th"/>
    <property type="match status" value="1"/>
</dbReference>
<dbReference type="Pfam" id="PF00604">
    <property type="entry name" value="Flu_PB2_5th"/>
    <property type="match status" value="1"/>
</dbReference>
<dbReference type="Pfam" id="PF20951">
    <property type="entry name" value="Flu_PB2_6th"/>
    <property type="match status" value="1"/>
</dbReference>
<dbReference type="Pfam" id="PF20952">
    <property type="entry name" value="Flu_PB2_7th"/>
    <property type="match status" value="1"/>
</dbReference>
<dbReference type="SUPFAM" id="SSF160453">
    <property type="entry name" value="PB2 C-terminal domain-like"/>
    <property type="match status" value="1"/>
</dbReference>
<organism>
    <name type="scientific">Influenza A virus (strain A/Goose/Guangdong/1/1996 H5N1 genotype Gs/Gd)</name>
    <dbReference type="NCBI Taxonomy" id="93838"/>
    <lineage>
        <taxon>Viruses</taxon>
        <taxon>Riboviria</taxon>
        <taxon>Orthornavirae</taxon>
        <taxon>Negarnaviricota</taxon>
        <taxon>Polyploviricotina</taxon>
        <taxon>Insthoviricetes</taxon>
        <taxon>Articulavirales</taxon>
        <taxon>Orthomyxoviridae</taxon>
        <taxon>Alphainfluenzavirus</taxon>
        <taxon>Alphainfluenzavirus influenzae</taxon>
        <taxon>Influenza A virus</taxon>
    </lineage>
</organism>